<proteinExistence type="inferred from homology"/>
<comment type="function">
    <text evidence="1">This is one of the proteins that bind and probably mediate the attachment of the 5S RNA into the large ribosomal subunit, where it forms part of the central protuberance.</text>
</comment>
<comment type="subunit">
    <text evidence="1">Part of the 50S ribosomal subunit; part of the 5S rRNA/L5/L18/L25 subcomplex. Contacts the 5S and 23S rRNAs.</text>
</comment>
<comment type="similarity">
    <text evidence="1">Belongs to the universal ribosomal protein uL18 family.</text>
</comment>
<sequence length="119" mass="12846">MSINKNIARLRRAKSTRSHIRELGVARLSVLRTGQHLYAQVFTADGSKVIAAANTLQADVKDGLKNGKNSDAAVKVGKLIAERAKAAGIEKVAFDRSGYRYHGRIKALADAAREGGLQF</sequence>
<dbReference type="EMBL" id="AP008229">
    <property type="protein sequence ID" value="BAE70126.1"/>
    <property type="molecule type" value="Genomic_DNA"/>
</dbReference>
<dbReference type="RefSeq" id="WP_010371104.1">
    <property type="nucleotide sequence ID" value="NC_007705.1"/>
</dbReference>
<dbReference type="SMR" id="Q2P001"/>
<dbReference type="GeneID" id="97210520"/>
<dbReference type="KEGG" id="xom:XOO3371"/>
<dbReference type="HOGENOM" id="CLU_098841_0_1_6"/>
<dbReference type="GO" id="GO:0022625">
    <property type="term" value="C:cytosolic large ribosomal subunit"/>
    <property type="evidence" value="ECO:0007669"/>
    <property type="project" value="TreeGrafter"/>
</dbReference>
<dbReference type="GO" id="GO:0008097">
    <property type="term" value="F:5S rRNA binding"/>
    <property type="evidence" value="ECO:0007669"/>
    <property type="project" value="TreeGrafter"/>
</dbReference>
<dbReference type="GO" id="GO:0003735">
    <property type="term" value="F:structural constituent of ribosome"/>
    <property type="evidence" value="ECO:0007669"/>
    <property type="project" value="InterPro"/>
</dbReference>
<dbReference type="GO" id="GO:0006412">
    <property type="term" value="P:translation"/>
    <property type="evidence" value="ECO:0007669"/>
    <property type="project" value="UniProtKB-UniRule"/>
</dbReference>
<dbReference type="CDD" id="cd00432">
    <property type="entry name" value="Ribosomal_L18_L5e"/>
    <property type="match status" value="1"/>
</dbReference>
<dbReference type="FunFam" id="3.30.420.100:FF:000001">
    <property type="entry name" value="50S ribosomal protein L18"/>
    <property type="match status" value="1"/>
</dbReference>
<dbReference type="Gene3D" id="3.30.420.100">
    <property type="match status" value="1"/>
</dbReference>
<dbReference type="HAMAP" id="MF_01337_B">
    <property type="entry name" value="Ribosomal_uL18_B"/>
    <property type="match status" value="1"/>
</dbReference>
<dbReference type="InterPro" id="IPR004389">
    <property type="entry name" value="Ribosomal_uL18_bac-type"/>
</dbReference>
<dbReference type="InterPro" id="IPR005484">
    <property type="entry name" value="Ribosomal_uL18_bac/euk"/>
</dbReference>
<dbReference type="NCBIfam" id="TIGR00060">
    <property type="entry name" value="L18_bact"/>
    <property type="match status" value="1"/>
</dbReference>
<dbReference type="PANTHER" id="PTHR12899">
    <property type="entry name" value="39S RIBOSOMAL PROTEIN L18, MITOCHONDRIAL"/>
    <property type="match status" value="1"/>
</dbReference>
<dbReference type="PANTHER" id="PTHR12899:SF3">
    <property type="entry name" value="LARGE RIBOSOMAL SUBUNIT PROTEIN UL18M"/>
    <property type="match status" value="1"/>
</dbReference>
<dbReference type="Pfam" id="PF00861">
    <property type="entry name" value="Ribosomal_L18p"/>
    <property type="match status" value="1"/>
</dbReference>
<dbReference type="SUPFAM" id="SSF53137">
    <property type="entry name" value="Translational machinery components"/>
    <property type="match status" value="1"/>
</dbReference>
<keyword id="KW-0687">Ribonucleoprotein</keyword>
<keyword id="KW-0689">Ribosomal protein</keyword>
<keyword id="KW-0694">RNA-binding</keyword>
<keyword id="KW-0699">rRNA-binding</keyword>
<reference key="1">
    <citation type="journal article" date="2005" name="Jpn. Agric. Res. Q.">
        <title>Genome sequence of Xanthomonas oryzae pv. oryzae suggests contribution of large numbers of effector genes and insertion sequences to its race diversity.</title>
        <authorList>
            <person name="Ochiai H."/>
            <person name="Inoue Y."/>
            <person name="Takeya M."/>
            <person name="Sasaki A."/>
            <person name="Kaku H."/>
        </authorList>
    </citation>
    <scope>NUCLEOTIDE SEQUENCE [LARGE SCALE GENOMIC DNA]</scope>
    <source>
        <strain>MAFF 311018</strain>
    </source>
</reference>
<gene>
    <name evidence="1" type="primary">rplR</name>
    <name type="ordered locus">XOO3371</name>
</gene>
<accession>Q2P001</accession>
<organism>
    <name type="scientific">Xanthomonas oryzae pv. oryzae (strain MAFF 311018)</name>
    <dbReference type="NCBI Taxonomy" id="342109"/>
    <lineage>
        <taxon>Bacteria</taxon>
        <taxon>Pseudomonadati</taxon>
        <taxon>Pseudomonadota</taxon>
        <taxon>Gammaproteobacteria</taxon>
        <taxon>Lysobacterales</taxon>
        <taxon>Lysobacteraceae</taxon>
        <taxon>Xanthomonas</taxon>
    </lineage>
</organism>
<feature type="chain" id="PRO_0000251394" description="Large ribosomal subunit protein uL18">
    <location>
        <begin position="1"/>
        <end position="119"/>
    </location>
</feature>
<name>RL18_XANOM</name>
<evidence type="ECO:0000255" key="1">
    <source>
        <dbReference type="HAMAP-Rule" id="MF_01337"/>
    </source>
</evidence>
<evidence type="ECO:0000305" key="2"/>
<protein>
    <recommendedName>
        <fullName evidence="1">Large ribosomal subunit protein uL18</fullName>
    </recommendedName>
    <alternativeName>
        <fullName evidence="2">50S ribosomal protein L18</fullName>
    </alternativeName>
</protein>